<organism>
    <name type="scientific">Emericella nidulans (strain FGSC A4 / ATCC 38163 / CBS 112.46 / NRRL 194 / M139)</name>
    <name type="common">Aspergillus nidulans</name>
    <dbReference type="NCBI Taxonomy" id="227321"/>
    <lineage>
        <taxon>Eukaryota</taxon>
        <taxon>Fungi</taxon>
        <taxon>Dikarya</taxon>
        <taxon>Ascomycota</taxon>
        <taxon>Pezizomycotina</taxon>
        <taxon>Eurotiomycetes</taxon>
        <taxon>Eurotiomycetidae</taxon>
        <taxon>Eurotiales</taxon>
        <taxon>Aspergillaceae</taxon>
        <taxon>Aspergillus</taxon>
        <taxon>Aspergillus subgen. Nidulantes</taxon>
    </lineage>
</organism>
<comment type="function">
    <text evidence="1">Pectinolytic enzymes consist of four classes of enzymes: pectin lyase, polygalacturonase, pectin methylesterase and rhamnogalacturonase. Among pectinolytic enzymes, pectin lyase is the most important in depolymerization of pectin, since it cleaves internal glycosidic bonds of highly methylated pectins (By similarity).</text>
</comment>
<comment type="catalytic activity">
    <reaction>
        <text>Eliminative cleavage of (1-&gt;4)-alpha-D-galacturonan methyl ester to give oligosaccharides with 4-deoxy-6-O-methyl-alpha-D-galact-4-enuronosyl groups at their non-reducing ends.</text>
        <dbReference type="EC" id="4.2.2.10"/>
    </reaction>
</comment>
<comment type="subcellular location">
    <subcellularLocation>
        <location evidence="1">Secreted</location>
    </subcellularLocation>
</comment>
<comment type="similarity">
    <text evidence="3">Belongs to the polysaccharide lyase 1 family.</text>
</comment>
<protein>
    <recommendedName>
        <fullName>Probable pectin lyase D</fullName>
        <shortName>PLD</shortName>
        <ecNumber>4.2.2.10</ecNumber>
    </recommendedName>
</protein>
<keyword id="KW-0119">Carbohydrate metabolism</keyword>
<keyword id="KW-0961">Cell wall biogenesis/degradation</keyword>
<keyword id="KW-1015">Disulfide bond</keyword>
<keyword id="KW-0325">Glycoprotein</keyword>
<keyword id="KW-0456">Lyase</keyword>
<keyword id="KW-0624">Polysaccharide degradation</keyword>
<keyword id="KW-1185">Reference proteome</keyword>
<keyword id="KW-0964">Secreted</keyword>
<keyword id="KW-0732">Signal</keyword>
<sequence length="377" mass="39537">MRVSAFALLAAAATAAATSVQGAAEGFAKGVTGGGSATPVYPTTTDELVSYLGDDEARVIVLTKTFDFRGTEGTTTAKGCSPWGTASGCQLAINKDGWCDNYQPDAPQTTITYDTAGMLGITVKSNKSLIGQGTAGVIKGKGIRIVNGAKNVIVQNIAITDINPQYVWGGDAITLNDVDMVWIDHVTTARIARQHIVLGTNACNRVTISNNYFNGVSDYSATCDGYHYWGLYLDGSNDMVTLQGNYIHHFSGRSPKVGGNTLLHAVNNYWYDSTGHAFEIAAGSSVLAEGNVFQNINAPVESSSLAGNLFTSPDSNTNKVCSSYLGHTCQLNAFGSSGSFNQADEGFLVNFKGKNVASADAYSAAQSVPNNAGQGKL</sequence>
<name>PELD_EMENI</name>
<proteinExistence type="inferred from homology"/>
<feature type="signal peptide" evidence="2">
    <location>
        <begin position="1"/>
        <end position="17"/>
    </location>
</feature>
<feature type="chain" id="PRO_0000394354" description="Probable pectin lyase D">
    <location>
        <begin position="18"/>
        <end position="377"/>
    </location>
</feature>
<feature type="active site" evidence="2">
    <location>
        <position position="253"/>
    </location>
</feature>
<feature type="glycosylation site" description="N-linked (GlcNAc...) asparagine" evidence="2">
    <location>
        <position position="126"/>
    </location>
</feature>
<feature type="disulfide bond" evidence="1">
    <location>
        <begin position="80"/>
        <end position="99"/>
    </location>
</feature>
<feature type="disulfide bond" evidence="1">
    <location>
        <begin position="89"/>
        <end position="223"/>
    </location>
</feature>
<feature type="disulfide bond" evidence="1">
    <location>
        <begin position="321"/>
        <end position="329"/>
    </location>
</feature>
<gene>
    <name type="primary">pelD</name>
    <name type="ORF">AN9439</name>
</gene>
<reference key="1">
    <citation type="journal article" date="2005" name="Nature">
        <title>Sequencing of Aspergillus nidulans and comparative analysis with A. fumigatus and A. oryzae.</title>
        <authorList>
            <person name="Galagan J.E."/>
            <person name="Calvo S.E."/>
            <person name="Cuomo C."/>
            <person name="Ma L.-J."/>
            <person name="Wortman J.R."/>
            <person name="Batzoglou S."/>
            <person name="Lee S.-I."/>
            <person name="Bastuerkmen M."/>
            <person name="Spevak C.C."/>
            <person name="Clutterbuck J."/>
            <person name="Kapitonov V."/>
            <person name="Jurka J."/>
            <person name="Scazzocchio C."/>
            <person name="Farman M.L."/>
            <person name="Butler J."/>
            <person name="Purcell S."/>
            <person name="Harris S."/>
            <person name="Braus G.H."/>
            <person name="Draht O."/>
            <person name="Busch S."/>
            <person name="D'Enfert C."/>
            <person name="Bouchier C."/>
            <person name="Goldman G.H."/>
            <person name="Bell-Pedersen D."/>
            <person name="Griffiths-Jones S."/>
            <person name="Doonan J.H."/>
            <person name="Yu J."/>
            <person name="Vienken K."/>
            <person name="Pain A."/>
            <person name="Freitag M."/>
            <person name="Selker E.U."/>
            <person name="Archer D.B."/>
            <person name="Penalva M.A."/>
            <person name="Oakley B.R."/>
            <person name="Momany M."/>
            <person name="Tanaka T."/>
            <person name="Kumagai T."/>
            <person name="Asai K."/>
            <person name="Machida M."/>
            <person name="Nierman W.C."/>
            <person name="Denning D.W."/>
            <person name="Caddick M.X."/>
            <person name="Hynes M."/>
            <person name="Paoletti M."/>
            <person name="Fischer R."/>
            <person name="Miller B.L."/>
            <person name="Dyer P.S."/>
            <person name="Sachs M.S."/>
            <person name="Osmani S.A."/>
            <person name="Birren B.W."/>
        </authorList>
    </citation>
    <scope>NUCLEOTIDE SEQUENCE [LARGE SCALE GENOMIC DNA]</scope>
    <source>
        <strain>FGSC A4 / ATCC 38163 / CBS 112.46 / NRRL 194 / M139</strain>
    </source>
</reference>
<reference key="2">
    <citation type="journal article" date="2009" name="Fungal Genet. Biol.">
        <title>The 2008 update of the Aspergillus nidulans genome annotation: a community effort.</title>
        <authorList>
            <person name="Wortman J.R."/>
            <person name="Gilsenan J.M."/>
            <person name="Joardar V."/>
            <person name="Deegan J."/>
            <person name="Clutterbuck J."/>
            <person name="Andersen M.R."/>
            <person name="Archer D."/>
            <person name="Bencina M."/>
            <person name="Braus G."/>
            <person name="Coutinho P."/>
            <person name="von Dohren H."/>
            <person name="Doonan J."/>
            <person name="Driessen A.J."/>
            <person name="Durek P."/>
            <person name="Espeso E."/>
            <person name="Fekete E."/>
            <person name="Flipphi M."/>
            <person name="Estrada C.G."/>
            <person name="Geysens S."/>
            <person name="Goldman G."/>
            <person name="de Groot P.W."/>
            <person name="Hansen K."/>
            <person name="Harris S.D."/>
            <person name="Heinekamp T."/>
            <person name="Helmstaedt K."/>
            <person name="Henrissat B."/>
            <person name="Hofmann G."/>
            <person name="Homan T."/>
            <person name="Horio T."/>
            <person name="Horiuchi H."/>
            <person name="James S."/>
            <person name="Jones M."/>
            <person name="Karaffa L."/>
            <person name="Karanyi Z."/>
            <person name="Kato M."/>
            <person name="Keller N."/>
            <person name="Kelly D.E."/>
            <person name="Kiel J.A."/>
            <person name="Kim J.M."/>
            <person name="van der Klei I.J."/>
            <person name="Klis F.M."/>
            <person name="Kovalchuk A."/>
            <person name="Krasevec N."/>
            <person name="Kubicek C.P."/>
            <person name="Liu B."/>
            <person name="Maccabe A."/>
            <person name="Meyer V."/>
            <person name="Mirabito P."/>
            <person name="Miskei M."/>
            <person name="Mos M."/>
            <person name="Mullins J."/>
            <person name="Nelson D.R."/>
            <person name="Nielsen J."/>
            <person name="Oakley B.R."/>
            <person name="Osmani S.A."/>
            <person name="Pakula T."/>
            <person name="Paszewski A."/>
            <person name="Paulsen I."/>
            <person name="Pilsyk S."/>
            <person name="Pocsi I."/>
            <person name="Punt P.J."/>
            <person name="Ram A.F."/>
            <person name="Ren Q."/>
            <person name="Robellet X."/>
            <person name="Robson G."/>
            <person name="Seiboth B."/>
            <person name="van Solingen P."/>
            <person name="Specht T."/>
            <person name="Sun J."/>
            <person name="Taheri-Talesh N."/>
            <person name="Takeshita N."/>
            <person name="Ussery D."/>
            <person name="vanKuyk P.A."/>
            <person name="Visser H."/>
            <person name="van de Vondervoort P.J."/>
            <person name="de Vries R.P."/>
            <person name="Walton J."/>
            <person name="Xiang X."/>
            <person name="Xiong Y."/>
            <person name="Zeng A.P."/>
            <person name="Brandt B.W."/>
            <person name="Cornell M.J."/>
            <person name="van den Hondel C.A."/>
            <person name="Visser J."/>
            <person name="Oliver S.G."/>
            <person name="Turner G."/>
        </authorList>
    </citation>
    <scope>GENOME REANNOTATION</scope>
    <source>
        <strain>FGSC A4 / ATCC 38163 / CBS 112.46 / NRRL 194 / M139</strain>
    </source>
</reference>
<evidence type="ECO:0000250" key="1"/>
<evidence type="ECO:0000255" key="2"/>
<evidence type="ECO:0000305" key="3"/>
<accession>Q5AQJ1</accession>
<accession>C8V392</accession>
<dbReference type="EC" id="4.2.2.10"/>
<dbReference type="EMBL" id="AACD01000181">
    <property type="protein sequence ID" value="EAA66813.1"/>
    <property type="molecule type" value="Genomic_DNA"/>
</dbReference>
<dbReference type="EMBL" id="BN001301">
    <property type="protein sequence ID" value="CBF71823.1"/>
    <property type="molecule type" value="Genomic_DNA"/>
</dbReference>
<dbReference type="RefSeq" id="XP_868821.1">
    <property type="nucleotide sequence ID" value="XM_863728.1"/>
</dbReference>
<dbReference type="SMR" id="Q5AQJ1"/>
<dbReference type="CAZy" id="PL1">
    <property type="family name" value="Polysaccharide Lyase Family 1"/>
</dbReference>
<dbReference type="GlyCosmos" id="Q5AQJ1">
    <property type="glycosylation" value="1 site, No reported glycans"/>
</dbReference>
<dbReference type="EnsemblFungi" id="CBF71823">
    <property type="protein sequence ID" value="CBF71823"/>
    <property type="gene ID" value="ANIA_09439"/>
</dbReference>
<dbReference type="KEGG" id="ani:ANIA_09439"/>
<dbReference type="VEuPathDB" id="FungiDB:AN9439"/>
<dbReference type="eggNOG" id="ENOG502QXM6">
    <property type="taxonomic scope" value="Eukaryota"/>
</dbReference>
<dbReference type="HOGENOM" id="CLU_021980_0_1_1"/>
<dbReference type="InParanoid" id="Q5AQJ1"/>
<dbReference type="OMA" id="NCYINGV"/>
<dbReference type="OrthoDB" id="1637350at2759"/>
<dbReference type="Proteomes" id="UP000000560">
    <property type="component" value="Chromosome I"/>
</dbReference>
<dbReference type="GO" id="GO:0005576">
    <property type="term" value="C:extracellular region"/>
    <property type="evidence" value="ECO:0007669"/>
    <property type="project" value="UniProtKB-SubCell"/>
</dbReference>
<dbReference type="GO" id="GO:0030570">
    <property type="term" value="F:pectate lyase activity"/>
    <property type="evidence" value="ECO:0007669"/>
    <property type="project" value="InterPro"/>
</dbReference>
<dbReference type="GO" id="GO:0047490">
    <property type="term" value="F:pectin lyase activity"/>
    <property type="evidence" value="ECO:0000250"/>
    <property type="project" value="UniProtKB"/>
</dbReference>
<dbReference type="GO" id="GO:0071555">
    <property type="term" value="P:cell wall organization"/>
    <property type="evidence" value="ECO:0007669"/>
    <property type="project" value="UniProtKB-KW"/>
</dbReference>
<dbReference type="GO" id="GO:0045490">
    <property type="term" value="P:pectin catabolic process"/>
    <property type="evidence" value="ECO:0000250"/>
    <property type="project" value="UniProtKB"/>
</dbReference>
<dbReference type="FunFam" id="2.160.20.10:FF:000003">
    <property type="entry name" value="Pectin lyase F"/>
    <property type="match status" value="1"/>
</dbReference>
<dbReference type="Gene3D" id="2.160.20.10">
    <property type="entry name" value="Single-stranded right-handed beta-helix, Pectin lyase-like"/>
    <property type="match status" value="1"/>
</dbReference>
<dbReference type="InterPro" id="IPR002022">
    <property type="entry name" value="Pec_lyase"/>
</dbReference>
<dbReference type="InterPro" id="IPR012334">
    <property type="entry name" value="Pectin_lyas_fold"/>
</dbReference>
<dbReference type="InterPro" id="IPR011050">
    <property type="entry name" value="Pectin_lyase_fold/virulence"/>
</dbReference>
<dbReference type="InterPro" id="IPR045032">
    <property type="entry name" value="PEL"/>
</dbReference>
<dbReference type="PANTHER" id="PTHR31683">
    <property type="entry name" value="PECTATE LYASE 18-RELATED"/>
    <property type="match status" value="1"/>
</dbReference>
<dbReference type="PANTHER" id="PTHR31683:SF16">
    <property type="entry name" value="PECTIN LYASE A-RELATED"/>
    <property type="match status" value="1"/>
</dbReference>
<dbReference type="Pfam" id="PF00544">
    <property type="entry name" value="Pectate_lyase_4"/>
    <property type="match status" value="1"/>
</dbReference>
<dbReference type="SMART" id="SM00656">
    <property type="entry name" value="Amb_all"/>
    <property type="match status" value="1"/>
</dbReference>
<dbReference type="SUPFAM" id="SSF51126">
    <property type="entry name" value="Pectin lyase-like"/>
    <property type="match status" value="1"/>
</dbReference>